<accession>Q47XG4</accession>
<comment type="function">
    <text evidence="1">Catalyzes the reversible interconversion of serine and glycine with tetrahydrofolate (THF) serving as the one-carbon carrier. This reaction serves as the major source of one-carbon groups required for the biosynthesis of purines, thymidylate, methionine, and other important biomolecules. Also exhibits THF-independent aldolase activity toward beta-hydroxyamino acids, producing glycine and aldehydes, via a retro-aldol mechanism.</text>
</comment>
<comment type="catalytic activity">
    <reaction evidence="1">
        <text>(6R)-5,10-methylene-5,6,7,8-tetrahydrofolate + glycine + H2O = (6S)-5,6,7,8-tetrahydrofolate + L-serine</text>
        <dbReference type="Rhea" id="RHEA:15481"/>
        <dbReference type="ChEBI" id="CHEBI:15377"/>
        <dbReference type="ChEBI" id="CHEBI:15636"/>
        <dbReference type="ChEBI" id="CHEBI:33384"/>
        <dbReference type="ChEBI" id="CHEBI:57305"/>
        <dbReference type="ChEBI" id="CHEBI:57453"/>
        <dbReference type="EC" id="2.1.2.1"/>
    </reaction>
</comment>
<comment type="cofactor">
    <cofactor evidence="1">
        <name>pyridoxal 5'-phosphate</name>
        <dbReference type="ChEBI" id="CHEBI:597326"/>
    </cofactor>
</comment>
<comment type="pathway">
    <text evidence="1">One-carbon metabolism; tetrahydrofolate interconversion.</text>
</comment>
<comment type="pathway">
    <text evidence="1">Amino-acid biosynthesis; glycine biosynthesis; glycine from L-serine: step 1/1.</text>
</comment>
<comment type="subunit">
    <text evidence="1">Homodimer.</text>
</comment>
<comment type="subcellular location">
    <subcellularLocation>
        <location evidence="1">Cytoplasm</location>
    </subcellularLocation>
</comment>
<comment type="similarity">
    <text evidence="1">Belongs to the SHMT family.</text>
</comment>
<dbReference type="EC" id="2.1.2.1" evidence="1"/>
<dbReference type="EMBL" id="CP000083">
    <property type="protein sequence ID" value="AAZ23994.1"/>
    <property type="molecule type" value="Genomic_DNA"/>
</dbReference>
<dbReference type="RefSeq" id="WP_011044592.1">
    <property type="nucleotide sequence ID" value="NC_003910.7"/>
</dbReference>
<dbReference type="SMR" id="Q47XG4"/>
<dbReference type="STRING" id="167879.CPS_3844"/>
<dbReference type="KEGG" id="cps:CPS_3844"/>
<dbReference type="eggNOG" id="COG0112">
    <property type="taxonomic scope" value="Bacteria"/>
</dbReference>
<dbReference type="HOGENOM" id="CLU_022477_2_1_6"/>
<dbReference type="UniPathway" id="UPA00193"/>
<dbReference type="UniPathway" id="UPA00288">
    <property type="reaction ID" value="UER01023"/>
</dbReference>
<dbReference type="Proteomes" id="UP000000547">
    <property type="component" value="Chromosome"/>
</dbReference>
<dbReference type="GO" id="GO:0005829">
    <property type="term" value="C:cytosol"/>
    <property type="evidence" value="ECO:0007669"/>
    <property type="project" value="TreeGrafter"/>
</dbReference>
<dbReference type="GO" id="GO:0004372">
    <property type="term" value="F:glycine hydroxymethyltransferase activity"/>
    <property type="evidence" value="ECO:0007669"/>
    <property type="project" value="UniProtKB-UniRule"/>
</dbReference>
<dbReference type="GO" id="GO:0030170">
    <property type="term" value="F:pyridoxal phosphate binding"/>
    <property type="evidence" value="ECO:0007669"/>
    <property type="project" value="UniProtKB-UniRule"/>
</dbReference>
<dbReference type="GO" id="GO:0019264">
    <property type="term" value="P:glycine biosynthetic process from serine"/>
    <property type="evidence" value="ECO:0007669"/>
    <property type="project" value="UniProtKB-UniRule"/>
</dbReference>
<dbReference type="GO" id="GO:0035999">
    <property type="term" value="P:tetrahydrofolate interconversion"/>
    <property type="evidence" value="ECO:0007669"/>
    <property type="project" value="UniProtKB-UniRule"/>
</dbReference>
<dbReference type="CDD" id="cd00378">
    <property type="entry name" value="SHMT"/>
    <property type="match status" value="1"/>
</dbReference>
<dbReference type="FunFam" id="3.40.640.10:FF:000001">
    <property type="entry name" value="Serine hydroxymethyltransferase"/>
    <property type="match status" value="1"/>
</dbReference>
<dbReference type="Gene3D" id="3.90.1150.10">
    <property type="entry name" value="Aspartate Aminotransferase, domain 1"/>
    <property type="match status" value="1"/>
</dbReference>
<dbReference type="Gene3D" id="3.40.640.10">
    <property type="entry name" value="Type I PLP-dependent aspartate aminotransferase-like (Major domain)"/>
    <property type="match status" value="1"/>
</dbReference>
<dbReference type="HAMAP" id="MF_00051">
    <property type="entry name" value="SHMT"/>
    <property type="match status" value="1"/>
</dbReference>
<dbReference type="InterPro" id="IPR015424">
    <property type="entry name" value="PyrdxlP-dep_Trfase"/>
</dbReference>
<dbReference type="InterPro" id="IPR015421">
    <property type="entry name" value="PyrdxlP-dep_Trfase_major"/>
</dbReference>
<dbReference type="InterPro" id="IPR015422">
    <property type="entry name" value="PyrdxlP-dep_Trfase_small"/>
</dbReference>
<dbReference type="InterPro" id="IPR001085">
    <property type="entry name" value="Ser_HO-MeTrfase"/>
</dbReference>
<dbReference type="InterPro" id="IPR049943">
    <property type="entry name" value="Ser_HO-MeTrfase-like"/>
</dbReference>
<dbReference type="InterPro" id="IPR019798">
    <property type="entry name" value="Ser_HO-MeTrfase_PLP_BS"/>
</dbReference>
<dbReference type="InterPro" id="IPR039429">
    <property type="entry name" value="SHMT-like_dom"/>
</dbReference>
<dbReference type="NCBIfam" id="NF000586">
    <property type="entry name" value="PRK00011.1"/>
    <property type="match status" value="1"/>
</dbReference>
<dbReference type="PANTHER" id="PTHR11680">
    <property type="entry name" value="SERINE HYDROXYMETHYLTRANSFERASE"/>
    <property type="match status" value="1"/>
</dbReference>
<dbReference type="PANTHER" id="PTHR11680:SF35">
    <property type="entry name" value="SERINE HYDROXYMETHYLTRANSFERASE 1"/>
    <property type="match status" value="1"/>
</dbReference>
<dbReference type="Pfam" id="PF00464">
    <property type="entry name" value="SHMT"/>
    <property type="match status" value="1"/>
</dbReference>
<dbReference type="PIRSF" id="PIRSF000412">
    <property type="entry name" value="SHMT"/>
    <property type="match status" value="1"/>
</dbReference>
<dbReference type="SUPFAM" id="SSF53383">
    <property type="entry name" value="PLP-dependent transferases"/>
    <property type="match status" value="1"/>
</dbReference>
<dbReference type="PROSITE" id="PS00096">
    <property type="entry name" value="SHMT"/>
    <property type="match status" value="1"/>
</dbReference>
<gene>
    <name evidence="1" type="primary">glyA3</name>
    <name type="ordered locus">CPS_3844</name>
</gene>
<sequence>MKNTYTSGELEQFFSSDLSSTDGAVQVAIDLEEARQNQQIELIASENIVSKAVMEAQGTVLTNKYAEGYPGRRYYGGCEHVDLVETLAIDRAKLIFKADFVNVQPHSGAQANGAVMLALVKPGDTILGMSLDAGGHLTHGAKPAQSGKWFNAIHYGVRKDDMRIDYDQVLALAIEHQPKMIIAGGSAIPRQIDFAKFREIADQVGAILMVDMAHIAGLVAAGAHQNPLPFADVVTTTTHKTLRGPRGGLILTNNPDVAKKINSAVFPGLQGGPLMHVIAAKAVALGEVLEPSFGAYIKQVLSNARVLASTLQQRGCDIVTDGTDTHLMLVDLRPKGLKGNTTEESLERAGITCNKNGIPFDSEKPMVTSGIRLGTPAGTSRGFGNDEFELIGQWIGDVLDGLVANPEDNSVAEQKVLQQVQQLCLRFPLYS</sequence>
<name>GLYA3_COLP3</name>
<protein>
    <recommendedName>
        <fullName evidence="1">Serine hydroxymethyltransferase 3</fullName>
        <shortName evidence="1">SHMT 3</shortName>
        <shortName evidence="1">Serine methylase 3</shortName>
        <ecNumber evidence="1">2.1.2.1</ecNumber>
    </recommendedName>
</protein>
<feature type="chain" id="PRO_0000234969" description="Serine hydroxymethyltransferase 3">
    <location>
        <begin position="1"/>
        <end position="431"/>
    </location>
</feature>
<feature type="binding site" evidence="1">
    <location>
        <position position="131"/>
    </location>
    <ligand>
        <name>(6S)-5,6,7,8-tetrahydrofolate</name>
        <dbReference type="ChEBI" id="CHEBI:57453"/>
    </ligand>
</feature>
<feature type="binding site" evidence="1">
    <location>
        <begin position="135"/>
        <end position="137"/>
    </location>
    <ligand>
        <name>(6S)-5,6,7,8-tetrahydrofolate</name>
        <dbReference type="ChEBI" id="CHEBI:57453"/>
    </ligand>
</feature>
<feature type="site" description="Plays an important role in substrate specificity" evidence="1">
    <location>
        <position position="239"/>
    </location>
</feature>
<feature type="modified residue" description="N6-(pyridoxal phosphate)lysine" evidence="1">
    <location>
        <position position="240"/>
    </location>
</feature>
<organism>
    <name type="scientific">Colwellia psychrerythraea (strain 34H / ATCC BAA-681)</name>
    <name type="common">Vibrio psychroerythus</name>
    <dbReference type="NCBI Taxonomy" id="167879"/>
    <lineage>
        <taxon>Bacteria</taxon>
        <taxon>Pseudomonadati</taxon>
        <taxon>Pseudomonadota</taxon>
        <taxon>Gammaproteobacteria</taxon>
        <taxon>Alteromonadales</taxon>
        <taxon>Colwelliaceae</taxon>
        <taxon>Colwellia</taxon>
    </lineage>
</organism>
<proteinExistence type="inferred from homology"/>
<keyword id="KW-0028">Amino-acid biosynthesis</keyword>
<keyword id="KW-0963">Cytoplasm</keyword>
<keyword id="KW-0554">One-carbon metabolism</keyword>
<keyword id="KW-0663">Pyridoxal phosphate</keyword>
<keyword id="KW-0808">Transferase</keyword>
<reference key="1">
    <citation type="journal article" date="2005" name="Proc. Natl. Acad. Sci. U.S.A.">
        <title>The psychrophilic lifestyle as revealed by the genome sequence of Colwellia psychrerythraea 34H through genomic and proteomic analyses.</title>
        <authorList>
            <person name="Methe B.A."/>
            <person name="Nelson K.E."/>
            <person name="Deming J.W."/>
            <person name="Momen B."/>
            <person name="Melamud E."/>
            <person name="Zhang X."/>
            <person name="Moult J."/>
            <person name="Madupu R."/>
            <person name="Nelson W.C."/>
            <person name="Dodson R.J."/>
            <person name="Brinkac L.M."/>
            <person name="Daugherty S.C."/>
            <person name="Durkin A.S."/>
            <person name="DeBoy R.T."/>
            <person name="Kolonay J.F."/>
            <person name="Sullivan S.A."/>
            <person name="Zhou L."/>
            <person name="Davidsen T.M."/>
            <person name="Wu M."/>
            <person name="Huston A.L."/>
            <person name="Lewis M."/>
            <person name="Weaver B."/>
            <person name="Weidman J.F."/>
            <person name="Khouri H."/>
            <person name="Utterback T.R."/>
            <person name="Feldblyum T.V."/>
            <person name="Fraser C.M."/>
        </authorList>
    </citation>
    <scope>NUCLEOTIDE SEQUENCE [LARGE SCALE GENOMIC DNA]</scope>
    <source>
        <strain>34H / ATCC BAA-681</strain>
    </source>
</reference>
<evidence type="ECO:0000255" key="1">
    <source>
        <dbReference type="HAMAP-Rule" id="MF_00051"/>
    </source>
</evidence>